<comment type="function">
    <text evidence="1">DNA repair enzyme involved in the repair of deaminated bases. Selectively cleaves double-stranded DNA at the second phosphodiester bond 3' to a deoxyinosine leaving behind the intact lesion on the nicked DNA.</text>
</comment>
<comment type="catalytic activity">
    <reaction evidence="1">
        <text>Endonucleolytic cleavage at apurinic or apyrimidinic sites to products with a 5'-phosphate.</text>
        <dbReference type="EC" id="3.1.21.7"/>
    </reaction>
</comment>
<comment type="cofactor">
    <cofactor evidence="1">
        <name>Mg(2+)</name>
        <dbReference type="ChEBI" id="CHEBI:18420"/>
    </cofactor>
</comment>
<comment type="subcellular location">
    <subcellularLocation>
        <location evidence="1">Cytoplasm</location>
    </subcellularLocation>
</comment>
<comment type="similarity">
    <text evidence="1">Belongs to the endonuclease V family.</text>
</comment>
<dbReference type="EC" id="3.1.21.7" evidence="1"/>
<dbReference type="EMBL" id="CP000816">
    <property type="protein sequence ID" value="ABU81520.1"/>
    <property type="molecule type" value="Genomic_DNA"/>
</dbReference>
<dbReference type="RefSeq" id="WP_011998372.1">
    <property type="nucleotide sequence ID" value="NC_009776.1"/>
</dbReference>
<dbReference type="SMR" id="A8A9B8"/>
<dbReference type="STRING" id="453591.Igni_0337"/>
<dbReference type="GeneID" id="5562626"/>
<dbReference type="KEGG" id="iho:Igni_0337"/>
<dbReference type="eggNOG" id="arCOG00929">
    <property type="taxonomic scope" value="Archaea"/>
</dbReference>
<dbReference type="HOGENOM" id="CLU_047631_1_1_2"/>
<dbReference type="OrthoDB" id="7885at2157"/>
<dbReference type="PhylomeDB" id="A8A9B8"/>
<dbReference type="Proteomes" id="UP000000262">
    <property type="component" value="Chromosome"/>
</dbReference>
<dbReference type="GO" id="GO:0005737">
    <property type="term" value="C:cytoplasm"/>
    <property type="evidence" value="ECO:0007669"/>
    <property type="project" value="UniProtKB-SubCell"/>
</dbReference>
<dbReference type="GO" id="GO:0043737">
    <property type="term" value="F:deoxyribonuclease V activity"/>
    <property type="evidence" value="ECO:0007669"/>
    <property type="project" value="UniProtKB-UniRule"/>
</dbReference>
<dbReference type="GO" id="GO:0000287">
    <property type="term" value="F:magnesium ion binding"/>
    <property type="evidence" value="ECO:0007669"/>
    <property type="project" value="UniProtKB-UniRule"/>
</dbReference>
<dbReference type="GO" id="GO:0016891">
    <property type="term" value="F:RNA endonuclease activity, producing 5'-phosphomonoesters"/>
    <property type="evidence" value="ECO:0007669"/>
    <property type="project" value="TreeGrafter"/>
</dbReference>
<dbReference type="GO" id="GO:0003727">
    <property type="term" value="F:single-stranded RNA binding"/>
    <property type="evidence" value="ECO:0007669"/>
    <property type="project" value="TreeGrafter"/>
</dbReference>
<dbReference type="GO" id="GO:0006281">
    <property type="term" value="P:DNA repair"/>
    <property type="evidence" value="ECO:0007669"/>
    <property type="project" value="UniProtKB-UniRule"/>
</dbReference>
<dbReference type="CDD" id="cd06559">
    <property type="entry name" value="Endonuclease_V"/>
    <property type="match status" value="1"/>
</dbReference>
<dbReference type="Gene3D" id="3.30.2170.10">
    <property type="entry name" value="archaeoglobus fulgidus dsm 4304 superfamily"/>
    <property type="match status" value="1"/>
</dbReference>
<dbReference type="HAMAP" id="MF_00801">
    <property type="entry name" value="Endonuclease_5"/>
    <property type="match status" value="1"/>
</dbReference>
<dbReference type="InterPro" id="IPR007581">
    <property type="entry name" value="Endonuclease-V"/>
</dbReference>
<dbReference type="PANTHER" id="PTHR28511">
    <property type="entry name" value="ENDONUCLEASE V"/>
    <property type="match status" value="1"/>
</dbReference>
<dbReference type="PANTHER" id="PTHR28511:SF1">
    <property type="entry name" value="ENDONUCLEASE V"/>
    <property type="match status" value="1"/>
</dbReference>
<dbReference type="Pfam" id="PF04493">
    <property type="entry name" value="Endonuclease_5"/>
    <property type="match status" value="1"/>
</dbReference>
<accession>A8A9B8</accession>
<proteinExistence type="inferred from homology"/>
<feature type="chain" id="PRO_1000083696" description="Endonuclease V">
    <location>
        <begin position="1"/>
        <end position="211"/>
    </location>
</feature>
<feature type="binding site" evidence="1">
    <location>
        <position position="37"/>
    </location>
    <ligand>
        <name>Mg(2+)</name>
        <dbReference type="ChEBI" id="CHEBI:18420"/>
    </ligand>
</feature>
<feature type="binding site" evidence="1">
    <location>
        <position position="102"/>
    </location>
    <ligand>
        <name>Mg(2+)</name>
        <dbReference type="ChEBI" id="CHEBI:18420"/>
    </ligand>
</feature>
<feature type="site" description="Interaction with target DNA" evidence="1">
    <location>
        <position position="73"/>
    </location>
</feature>
<evidence type="ECO:0000255" key="1">
    <source>
        <dbReference type="HAMAP-Rule" id="MF_00801"/>
    </source>
</evidence>
<protein>
    <recommendedName>
        <fullName evidence="1">Endonuclease V</fullName>
        <ecNumber evidence="1">3.1.21.7</ecNumber>
    </recommendedName>
    <alternativeName>
        <fullName evidence="1">Deoxyinosine 3'endonuclease</fullName>
    </alternativeName>
    <alternativeName>
        <fullName evidence="1">Deoxyribonuclease V</fullName>
        <shortName evidence="1">DNase V</shortName>
    </alternativeName>
</protein>
<gene>
    <name evidence="1" type="primary">nfi</name>
    <name type="ordered locus">Igni_0337</name>
</gene>
<reference key="1">
    <citation type="journal article" date="2008" name="Genome Biol.">
        <title>A genomic analysis of the archaeal system Ignicoccus hospitalis-Nanoarchaeum equitans.</title>
        <authorList>
            <person name="Podar M."/>
            <person name="Anderson I."/>
            <person name="Makarova K.S."/>
            <person name="Elkins J.G."/>
            <person name="Ivanova N."/>
            <person name="Wall M.A."/>
            <person name="Lykidis A."/>
            <person name="Mavromatis K."/>
            <person name="Sun H."/>
            <person name="Hudson M.E."/>
            <person name="Chen W."/>
            <person name="Deciu C."/>
            <person name="Hutchison D."/>
            <person name="Eads J.R."/>
            <person name="Anderson A."/>
            <person name="Fernandes F."/>
            <person name="Szeto E."/>
            <person name="Lapidus A."/>
            <person name="Kyrpides N.C."/>
            <person name="Saier M.H. Jr."/>
            <person name="Richardson P.M."/>
            <person name="Rachel R."/>
            <person name="Huber H."/>
            <person name="Eisen J.A."/>
            <person name="Koonin E.V."/>
            <person name="Keller M."/>
            <person name="Stetter K.O."/>
        </authorList>
    </citation>
    <scope>NUCLEOTIDE SEQUENCE [LARGE SCALE GENOMIC DNA]</scope>
    <source>
        <strain>KIN4/I / DSM 18386 / JCM 14125</strain>
    </source>
</reference>
<keyword id="KW-0963">Cytoplasm</keyword>
<keyword id="KW-0227">DNA damage</keyword>
<keyword id="KW-0234">DNA repair</keyword>
<keyword id="KW-0255">Endonuclease</keyword>
<keyword id="KW-0378">Hydrolase</keyword>
<keyword id="KW-0460">Magnesium</keyword>
<keyword id="KW-0479">Metal-binding</keyword>
<keyword id="KW-0540">Nuclease</keyword>
<keyword id="KW-1185">Reference proteome</keyword>
<organism>
    <name type="scientific">Ignicoccus hospitalis (strain KIN4/I / DSM 18386 / JCM 14125)</name>
    <dbReference type="NCBI Taxonomy" id="453591"/>
    <lineage>
        <taxon>Archaea</taxon>
        <taxon>Thermoproteota</taxon>
        <taxon>Thermoprotei</taxon>
        <taxon>Desulfurococcales</taxon>
        <taxon>Desulfurococcaceae</taxon>
        <taxon>Ignicoccus</taxon>
    </lineage>
</organism>
<sequence length="211" mass="23551">MTFDRRRASELQRKLSELVKEEDCFDPEAVEAVGGLDVSYKGDVGVSALSLIDYKTLRPLKHYYVVARVPIPYVPGFLAFREAPLHLTLIKKVKGYDLLLVDGHGRTHPRGLGIASHVGVTSGVPTVGVAKRRLVGEEERCGERECLVHEGKVVAYVIRRGKQKLYVSVGHCVSLETAYQIVKRLTVRRLPEPIAWADRISRSLARSLQLP</sequence>
<name>NFI_IGNH4</name>